<comment type="function">
    <text evidence="1">NDH-1 shuttles electrons from NADH, via FMN and iron-sulfur (Fe-S) centers, to quinones in the respiratory chain. The immediate electron acceptor for the enzyme in this species is believed to be a menaquinone. Couples the redox reaction to proton translocation (for every two electrons transferred, four hydrogen ions are translocated across the cytoplasmic membrane), and thus conserves the redox energy in a proton gradient.</text>
</comment>
<comment type="catalytic activity">
    <reaction evidence="1">
        <text>a quinone + NADH + 5 H(+)(in) = a quinol + NAD(+) + 4 H(+)(out)</text>
        <dbReference type="Rhea" id="RHEA:57888"/>
        <dbReference type="ChEBI" id="CHEBI:15378"/>
        <dbReference type="ChEBI" id="CHEBI:24646"/>
        <dbReference type="ChEBI" id="CHEBI:57540"/>
        <dbReference type="ChEBI" id="CHEBI:57945"/>
        <dbReference type="ChEBI" id="CHEBI:132124"/>
    </reaction>
</comment>
<comment type="cofactor">
    <cofactor evidence="1">
        <name>[4Fe-4S] cluster</name>
        <dbReference type="ChEBI" id="CHEBI:49883"/>
    </cofactor>
    <text evidence="1">Binds 1 [4Fe-4S] cluster.</text>
</comment>
<comment type="subunit">
    <text evidence="1">NDH-1 is composed of 14 different subunits. Subunits NuoB, C, D, E, F, and G constitute the peripheral sector of the complex.</text>
</comment>
<comment type="subcellular location">
    <subcellularLocation>
        <location evidence="1">Cell membrane</location>
        <topology evidence="1">Peripheral membrane protein</topology>
        <orientation evidence="1">Cytoplasmic side</orientation>
    </subcellularLocation>
</comment>
<comment type="similarity">
    <text evidence="1">Belongs to the complex I 20 kDa subunit family.</text>
</comment>
<dbReference type="EC" id="7.1.1.-" evidence="1"/>
<dbReference type="EMBL" id="CP001283">
    <property type="protein sequence ID" value="ACK88284.1"/>
    <property type="molecule type" value="Genomic_DNA"/>
</dbReference>
<dbReference type="RefSeq" id="WP_000236331.1">
    <property type="nucleotide sequence ID" value="NC_011773.1"/>
</dbReference>
<dbReference type="SMR" id="B7JGM4"/>
<dbReference type="GeneID" id="92803556"/>
<dbReference type="KEGG" id="bcu:BCAH820_5390"/>
<dbReference type="HOGENOM" id="CLU_055737_7_3_9"/>
<dbReference type="Proteomes" id="UP000001363">
    <property type="component" value="Chromosome"/>
</dbReference>
<dbReference type="GO" id="GO:0005886">
    <property type="term" value="C:plasma membrane"/>
    <property type="evidence" value="ECO:0007669"/>
    <property type="project" value="UniProtKB-SubCell"/>
</dbReference>
<dbReference type="GO" id="GO:0045271">
    <property type="term" value="C:respiratory chain complex I"/>
    <property type="evidence" value="ECO:0007669"/>
    <property type="project" value="TreeGrafter"/>
</dbReference>
<dbReference type="GO" id="GO:0051539">
    <property type="term" value="F:4 iron, 4 sulfur cluster binding"/>
    <property type="evidence" value="ECO:0007669"/>
    <property type="project" value="UniProtKB-KW"/>
</dbReference>
<dbReference type="GO" id="GO:0005506">
    <property type="term" value="F:iron ion binding"/>
    <property type="evidence" value="ECO:0007669"/>
    <property type="project" value="UniProtKB-UniRule"/>
</dbReference>
<dbReference type="GO" id="GO:0008137">
    <property type="term" value="F:NADH dehydrogenase (ubiquinone) activity"/>
    <property type="evidence" value="ECO:0007669"/>
    <property type="project" value="InterPro"/>
</dbReference>
<dbReference type="GO" id="GO:0050136">
    <property type="term" value="F:NADH:ubiquinone reductase (non-electrogenic) activity"/>
    <property type="evidence" value="ECO:0007669"/>
    <property type="project" value="UniProtKB-UniRule"/>
</dbReference>
<dbReference type="GO" id="GO:0048038">
    <property type="term" value="F:quinone binding"/>
    <property type="evidence" value="ECO:0007669"/>
    <property type="project" value="UniProtKB-KW"/>
</dbReference>
<dbReference type="GO" id="GO:0009060">
    <property type="term" value="P:aerobic respiration"/>
    <property type="evidence" value="ECO:0007669"/>
    <property type="project" value="TreeGrafter"/>
</dbReference>
<dbReference type="GO" id="GO:0015990">
    <property type="term" value="P:electron transport coupled proton transport"/>
    <property type="evidence" value="ECO:0007669"/>
    <property type="project" value="TreeGrafter"/>
</dbReference>
<dbReference type="FunFam" id="3.40.50.12280:FF:000002">
    <property type="entry name" value="NADH-quinone oxidoreductase subunit B"/>
    <property type="match status" value="1"/>
</dbReference>
<dbReference type="Gene3D" id="3.40.50.12280">
    <property type="match status" value="1"/>
</dbReference>
<dbReference type="HAMAP" id="MF_01356">
    <property type="entry name" value="NDH1_NuoB"/>
    <property type="match status" value="1"/>
</dbReference>
<dbReference type="InterPro" id="IPR006137">
    <property type="entry name" value="NADH_UbQ_OxRdtase-like_20kDa"/>
</dbReference>
<dbReference type="InterPro" id="IPR006138">
    <property type="entry name" value="NADH_UQ_OxRdtase_20Kd_su"/>
</dbReference>
<dbReference type="NCBIfam" id="TIGR01957">
    <property type="entry name" value="nuoB_fam"/>
    <property type="match status" value="1"/>
</dbReference>
<dbReference type="NCBIfam" id="NF005012">
    <property type="entry name" value="PRK06411.1"/>
    <property type="match status" value="1"/>
</dbReference>
<dbReference type="PANTHER" id="PTHR11995">
    <property type="entry name" value="NADH DEHYDROGENASE"/>
    <property type="match status" value="1"/>
</dbReference>
<dbReference type="PANTHER" id="PTHR11995:SF14">
    <property type="entry name" value="NADH DEHYDROGENASE [UBIQUINONE] IRON-SULFUR PROTEIN 7, MITOCHONDRIAL"/>
    <property type="match status" value="1"/>
</dbReference>
<dbReference type="Pfam" id="PF01058">
    <property type="entry name" value="Oxidored_q6"/>
    <property type="match status" value="1"/>
</dbReference>
<dbReference type="SUPFAM" id="SSF56770">
    <property type="entry name" value="HydA/Nqo6-like"/>
    <property type="match status" value="1"/>
</dbReference>
<reference key="1">
    <citation type="submission" date="2008-10" db="EMBL/GenBank/DDBJ databases">
        <title>Genome sequence of Bacillus cereus AH820.</title>
        <authorList>
            <person name="Dodson R.J."/>
            <person name="Durkin A.S."/>
            <person name="Rosovitz M.J."/>
            <person name="Rasko D.A."/>
            <person name="Hoffmaster A."/>
            <person name="Ravel J."/>
            <person name="Sutton G."/>
        </authorList>
    </citation>
    <scope>NUCLEOTIDE SEQUENCE [LARGE SCALE GENOMIC DNA]</scope>
    <source>
        <strain>AH820</strain>
    </source>
</reference>
<accession>B7JGM4</accession>
<protein>
    <recommendedName>
        <fullName evidence="1">NADH-quinone oxidoreductase subunit B</fullName>
        <ecNumber evidence="1">7.1.1.-</ecNumber>
    </recommendedName>
    <alternativeName>
        <fullName evidence="1">NADH dehydrogenase I subunit B</fullName>
    </alternativeName>
    <alternativeName>
        <fullName evidence="1">NDH-1 subunit B</fullName>
    </alternativeName>
</protein>
<evidence type="ECO:0000255" key="1">
    <source>
        <dbReference type="HAMAP-Rule" id="MF_01356"/>
    </source>
</evidence>
<gene>
    <name evidence="1" type="primary">nuoB</name>
    <name type="ordered locus">BCAH820_5390</name>
</gene>
<keyword id="KW-0004">4Fe-4S</keyword>
<keyword id="KW-1003">Cell membrane</keyword>
<keyword id="KW-0408">Iron</keyword>
<keyword id="KW-0411">Iron-sulfur</keyword>
<keyword id="KW-0472">Membrane</keyword>
<keyword id="KW-0479">Metal-binding</keyword>
<keyword id="KW-0520">NAD</keyword>
<keyword id="KW-0874">Quinone</keyword>
<keyword id="KW-1278">Translocase</keyword>
<keyword id="KW-0813">Transport</keyword>
<sequence length="172" mass="19226">MVINFEELHPNERAELERNIFFSTLEQLKGWARSNSLWPMTFGLACCAIEMMGVGSSHYDLDRFGSFFRTSPRQSDVMIVSGTVTKKMAPIVRRLYDQMPEPKWVIAMGSCATAGGPYVNSYAVVKGVDQIVPVDVYIPGCPPNPAALIYGINKLKEKIRYEAKTGKQVTNK</sequence>
<organism>
    <name type="scientific">Bacillus cereus (strain AH820)</name>
    <dbReference type="NCBI Taxonomy" id="405535"/>
    <lineage>
        <taxon>Bacteria</taxon>
        <taxon>Bacillati</taxon>
        <taxon>Bacillota</taxon>
        <taxon>Bacilli</taxon>
        <taxon>Bacillales</taxon>
        <taxon>Bacillaceae</taxon>
        <taxon>Bacillus</taxon>
        <taxon>Bacillus cereus group</taxon>
    </lineage>
</organism>
<feature type="chain" id="PRO_0000376129" description="NADH-quinone oxidoreductase subunit B">
    <location>
        <begin position="1"/>
        <end position="172"/>
    </location>
</feature>
<feature type="binding site" evidence="1">
    <location>
        <position position="46"/>
    </location>
    <ligand>
        <name>[4Fe-4S] cluster</name>
        <dbReference type="ChEBI" id="CHEBI:49883"/>
    </ligand>
</feature>
<feature type="binding site" evidence="1">
    <location>
        <position position="47"/>
    </location>
    <ligand>
        <name>[4Fe-4S] cluster</name>
        <dbReference type="ChEBI" id="CHEBI:49883"/>
    </ligand>
</feature>
<feature type="binding site" evidence="1">
    <location>
        <position position="111"/>
    </location>
    <ligand>
        <name>[4Fe-4S] cluster</name>
        <dbReference type="ChEBI" id="CHEBI:49883"/>
    </ligand>
</feature>
<feature type="binding site" evidence="1">
    <location>
        <position position="141"/>
    </location>
    <ligand>
        <name>[4Fe-4S] cluster</name>
        <dbReference type="ChEBI" id="CHEBI:49883"/>
    </ligand>
</feature>
<name>NUOB_BACC0</name>
<proteinExistence type="inferred from homology"/>